<proteinExistence type="inferred from homology"/>
<reference key="1">
    <citation type="journal article" date="2002" name="Proc. Natl. Acad. Sci. U.S.A.">
        <title>Complete genome sequence and comparative genomic analysis of an emerging human pathogen, serotype V Streptococcus agalactiae.</title>
        <authorList>
            <person name="Tettelin H."/>
            <person name="Masignani V."/>
            <person name="Cieslewicz M.J."/>
            <person name="Eisen J.A."/>
            <person name="Peterson S.N."/>
            <person name="Wessels M.R."/>
            <person name="Paulsen I.T."/>
            <person name="Nelson K.E."/>
            <person name="Margarit I."/>
            <person name="Read T.D."/>
            <person name="Madoff L.C."/>
            <person name="Wolf A.M."/>
            <person name="Beanan M.J."/>
            <person name="Brinkac L.M."/>
            <person name="Daugherty S.C."/>
            <person name="DeBoy R.T."/>
            <person name="Durkin A.S."/>
            <person name="Kolonay J.F."/>
            <person name="Madupu R."/>
            <person name="Lewis M.R."/>
            <person name="Radune D."/>
            <person name="Fedorova N.B."/>
            <person name="Scanlan D."/>
            <person name="Khouri H.M."/>
            <person name="Mulligan S."/>
            <person name="Carty H.A."/>
            <person name="Cline R.T."/>
            <person name="Van Aken S.E."/>
            <person name="Gill J."/>
            <person name="Scarselli M."/>
            <person name="Mora M."/>
            <person name="Iacobini E.T."/>
            <person name="Brettoni C."/>
            <person name="Galli G."/>
            <person name="Mariani M."/>
            <person name="Vegni F."/>
            <person name="Maione D."/>
            <person name="Rinaudo D."/>
            <person name="Rappuoli R."/>
            <person name="Telford J.L."/>
            <person name="Kasper D.L."/>
            <person name="Grandi G."/>
            <person name="Fraser C.M."/>
        </authorList>
    </citation>
    <scope>NUCLEOTIDE SEQUENCE [LARGE SCALE GENOMIC DNA]</scope>
    <source>
        <strain>ATCC BAA-611 / 2603 V/R</strain>
    </source>
</reference>
<organism>
    <name type="scientific">Streptococcus agalactiae serotype V (strain ATCC BAA-611 / 2603 V/R)</name>
    <dbReference type="NCBI Taxonomy" id="208435"/>
    <lineage>
        <taxon>Bacteria</taxon>
        <taxon>Bacillati</taxon>
        <taxon>Bacillota</taxon>
        <taxon>Bacilli</taxon>
        <taxon>Lactobacillales</taxon>
        <taxon>Streptococcaceae</taxon>
        <taxon>Streptococcus</taxon>
    </lineage>
</organism>
<sequence>MFIFKRKKQVEMPLEKIPAHIGIIMDGNGRWAKKRLKPRVMGHKAGMDALQEVTIAASGLGVKVLTVYAFSTENWSRPDDEVKFIMNLPVKFFDKYVPELDKNNVRVQVIGDTHKLPKATYDAMQRACLRTKHNSGLVLNFALNYGGRSEITNAIKEIAQDVLEAKLNPDDITEDLVANHLMTNSLPYLYRDPDLIIRTSGELRLSNFLPWQSAYSEFYFTPVLWPDFKKDELHKAIVDYNQRHRRFGSV</sequence>
<protein>
    <recommendedName>
        <fullName evidence="1">Isoprenyl transferase</fullName>
        <ecNumber evidence="1">2.5.1.-</ecNumber>
    </recommendedName>
</protein>
<evidence type="ECO:0000255" key="1">
    <source>
        <dbReference type="HAMAP-Rule" id="MF_01139"/>
    </source>
</evidence>
<comment type="function">
    <text evidence="1">Catalyzes the condensation of isopentenyl diphosphate (IPP) with allylic pyrophosphates generating different type of terpenoids.</text>
</comment>
<comment type="cofactor">
    <cofactor evidence="1">
        <name>Mg(2+)</name>
        <dbReference type="ChEBI" id="CHEBI:18420"/>
    </cofactor>
    <text evidence="1">Binds 2 magnesium ions per subunit.</text>
</comment>
<comment type="subunit">
    <text evidence="1">Homodimer.</text>
</comment>
<comment type="similarity">
    <text evidence="1">Belongs to the UPP synthase family.</text>
</comment>
<gene>
    <name evidence="1" type="primary">uppS</name>
    <name type="ordered locus">SAG1916</name>
</gene>
<feature type="chain" id="PRO_0000123682" description="Isoprenyl transferase">
    <location>
        <begin position="1"/>
        <end position="250"/>
    </location>
</feature>
<feature type="active site" evidence="1">
    <location>
        <position position="26"/>
    </location>
</feature>
<feature type="active site" description="Proton acceptor" evidence="1">
    <location>
        <position position="74"/>
    </location>
</feature>
<feature type="binding site" evidence="1">
    <location>
        <position position="26"/>
    </location>
    <ligand>
        <name>Mg(2+)</name>
        <dbReference type="ChEBI" id="CHEBI:18420"/>
    </ligand>
</feature>
<feature type="binding site" evidence="1">
    <location>
        <begin position="27"/>
        <end position="30"/>
    </location>
    <ligand>
        <name>substrate</name>
    </ligand>
</feature>
<feature type="binding site" evidence="1">
    <location>
        <position position="31"/>
    </location>
    <ligand>
        <name>substrate</name>
    </ligand>
</feature>
<feature type="binding site" evidence="1">
    <location>
        <position position="39"/>
    </location>
    <ligand>
        <name>substrate</name>
    </ligand>
</feature>
<feature type="binding site" evidence="1">
    <location>
        <position position="43"/>
    </location>
    <ligand>
        <name>substrate</name>
    </ligand>
</feature>
<feature type="binding site" evidence="1">
    <location>
        <begin position="71"/>
        <end position="73"/>
    </location>
    <ligand>
        <name>substrate</name>
    </ligand>
</feature>
<feature type="binding site" evidence="1">
    <location>
        <position position="75"/>
    </location>
    <ligand>
        <name>substrate</name>
    </ligand>
</feature>
<feature type="binding site" evidence="1">
    <location>
        <position position="77"/>
    </location>
    <ligand>
        <name>substrate</name>
    </ligand>
</feature>
<feature type="binding site" evidence="1">
    <location>
        <position position="198"/>
    </location>
    <ligand>
        <name>substrate</name>
    </ligand>
</feature>
<feature type="binding site" evidence="1">
    <location>
        <begin position="204"/>
        <end position="206"/>
    </location>
    <ligand>
        <name>substrate</name>
    </ligand>
</feature>
<feature type="binding site" evidence="1">
    <location>
        <position position="217"/>
    </location>
    <ligand>
        <name>Mg(2+)</name>
        <dbReference type="ChEBI" id="CHEBI:18420"/>
    </ligand>
</feature>
<dbReference type="EC" id="2.5.1.-" evidence="1"/>
<dbReference type="EMBL" id="AE009948">
    <property type="protein sequence ID" value="AAN00778.1"/>
    <property type="molecule type" value="Genomic_DNA"/>
</dbReference>
<dbReference type="RefSeq" id="NP_688905.1">
    <property type="nucleotide sequence ID" value="NC_004116.1"/>
</dbReference>
<dbReference type="RefSeq" id="WP_000469563.1">
    <property type="nucleotide sequence ID" value="NC_004116.1"/>
</dbReference>
<dbReference type="SMR" id="Q8DXD5"/>
<dbReference type="STRING" id="208435.SAG1916"/>
<dbReference type="KEGG" id="sag:SAG1916"/>
<dbReference type="PATRIC" id="fig|208435.3.peg.1920"/>
<dbReference type="HOGENOM" id="CLU_038505_1_1_9"/>
<dbReference type="OrthoDB" id="4191603at2"/>
<dbReference type="Proteomes" id="UP000000821">
    <property type="component" value="Chromosome"/>
</dbReference>
<dbReference type="GO" id="GO:0005829">
    <property type="term" value="C:cytosol"/>
    <property type="evidence" value="ECO:0007669"/>
    <property type="project" value="TreeGrafter"/>
</dbReference>
<dbReference type="GO" id="GO:0008834">
    <property type="term" value="F:ditrans,polycis-undecaprenyl-diphosphate synthase [(2E,6E)-farnesyl-diphosphate specific] activity"/>
    <property type="evidence" value="ECO:0007669"/>
    <property type="project" value="TreeGrafter"/>
</dbReference>
<dbReference type="GO" id="GO:0000287">
    <property type="term" value="F:magnesium ion binding"/>
    <property type="evidence" value="ECO:0007669"/>
    <property type="project" value="UniProtKB-UniRule"/>
</dbReference>
<dbReference type="GO" id="GO:0030145">
    <property type="term" value="F:manganese ion binding"/>
    <property type="evidence" value="ECO:0007669"/>
    <property type="project" value="TreeGrafter"/>
</dbReference>
<dbReference type="GO" id="GO:0016094">
    <property type="term" value="P:polyprenol biosynthetic process"/>
    <property type="evidence" value="ECO:0007669"/>
    <property type="project" value="TreeGrafter"/>
</dbReference>
<dbReference type="CDD" id="cd00475">
    <property type="entry name" value="Cis_IPPS"/>
    <property type="match status" value="1"/>
</dbReference>
<dbReference type="FunFam" id="3.40.1180.10:FF:000001">
    <property type="entry name" value="(2E,6E)-farnesyl-diphosphate-specific ditrans,polycis-undecaprenyl-diphosphate synthase"/>
    <property type="match status" value="1"/>
</dbReference>
<dbReference type="Gene3D" id="3.40.1180.10">
    <property type="entry name" value="Decaprenyl diphosphate synthase-like"/>
    <property type="match status" value="1"/>
</dbReference>
<dbReference type="HAMAP" id="MF_01139">
    <property type="entry name" value="ISPT"/>
    <property type="match status" value="1"/>
</dbReference>
<dbReference type="InterPro" id="IPR001441">
    <property type="entry name" value="UPP_synth-like"/>
</dbReference>
<dbReference type="InterPro" id="IPR018520">
    <property type="entry name" value="UPP_synth-like_CS"/>
</dbReference>
<dbReference type="InterPro" id="IPR036424">
    <property type="entry name" value="UPP_synth-like_sf"/>
</dbReference>
<dbReference type="NCBIfam" id="NF011405">
    <property type="entry name" value="PRK14830.1"/>
    <property type="match status" value="1"/>
</dbReference>
<dbReference type="NCBIfam" id="TIGR00055">
    <property type="entry name" value="uppS"/>
    <property type="match status" value="1"/>
</dbReference>
<dbReference type="PANTHER" id="PTHR10291:SF0">
    <property type="entry name" value="DEHYDRODOLICHYL DIPHOSPHATE SYNTHASE 2"/>
    <property type="match status" value="1"/>
</dbReference>
<dbReference type="PANTHER" id="PTHR10291">
    <property type="entry name" value="DEHYDRODOLICHYL DIPHOSPHATE SYNTHASE FAMILY MEMBER"/>
    <property type="match status" value="1"/>
</dbReference>
<dbReference type="Pfam" id="PF01255">
    <property type="entry name" value="Prenyltransf"/>
    <property type="match status" value="1"/>
</dbReference>
<dbReference type="SUPFAM" id="SSF64005">
    <property type="entry name" value="Undecaprenyl diphosphate synthase"/>
    <property type="match status" value="1"/>
</dbReference>
<dbReference type="PROSITE" id="PS01066">
    <property type="entry name" value="UPP_SYNTHASE"/>
    <property type="match status" value="1"/>
</dbReference>
<keyword id="KW-0460">Magnesium</keyword>
<keyword id="KW-0479">Metal-binding</keyword>
<keyword id="KW-1185">Reference proteome</keyword>
<keyword id="KW-0808">Transferase</keyword>
<accession>Q8DXD5</accession>
<name>ISPT_STRA5</name>